<comment type="function">
    <text evidence="1">Catalyzes the desulfonation of aliphatic sulfonates.</text>
</comment>
<comment type="catalytic activity">
    <reaction evidence="1">
        <text>an alkanesulfonate + FMNH2 + O2 = an aldehyde + FMN + sulfite + H2O + 2 H(+)</text>
        <dbReference type="Rhea" id="RHEA:23064"/>
        <dbReference type="ChEBI" id="CHEBI:15377"/>
        <dbReference type="ChEBI" id="CHEBI:15378"/>
        <dbReference type="ChEBI" id="CHEBI:15379"/>
        <dbReference type="ChEBI" id="CHEBI:17359"/>
        <dbReference type="ChEBI" id="CHEBI:17478"/>
        <dbReference type="ChEBI" id="CHEBI:57618"/>
        <dbReference type="ChEBI" id="CHEBI:58210"/>
        <dbReference type="ChEBI" id="CHEBI:134249"/>
        <dbReference type="EC" id="1.14.14.5"/>
    </reaction>
</comment>
<comment type="subunit">
    <text evidence="1">Homotetramer.</text>
</comment>
<comment type="miscellaneous">
    <text evidence="1">FMNH(2) which is absolutely required for this enzymatic reaction, is provided by SsuE.</text>
</comment>
<comment type="similarity">
    <text evidence="1">Belongs to the SsuD family.</text>
</comment>
<dbReference type="EC" id="1.14.14.5" evidence="1"/>
<dbReference type="EMBL" id="CU928164">
    <property type="protein sequence ID" value="CAR18339.1"/>
    <property type="molecule type" value="Genomic_DNA"/>
</dbReference>
<dbReference type="RefSeq" id="WP_000056008.1">
    <property type="nucleotide sequence ID" value="NC_011750.1"/>
</dbReference>
<dbReference type="RefSeq" id="YP_002408175.1">
    <property type="nucleotide sequence ID" value="NC_011750.1"/>
</dbReference>
<dbReference type="SMR" id="B7NM39"/>
<dbReference type="STRING" id="585057.ECIAI39_2212"/>
<dbReference type="KEGG" id="ect:ECIAI39_2212"/>
<dbReference type="PATRIC" id="fig|585057.6.peg.2303"/>
<dbReference type="HOGENOM" id="CLU_027853_1_0_6"/>
<dbReference type="Proteomes" id="UP000000749">
    <property type="component" value="Chromosome"/>
</dbReference>
<dbReference type="GO" id="GO:0008726">
    <property type="term" value="F:alkanesulfonate monooxygenase activity"/>
    <property type="evidence" value="ECO:0007669"/>
    <property type="project" value="UniProtKB-UniRule"/>
</dbReference>
<dbReference type="GO" id="GO:0046306">
    <property type="term" value="P:alkanesulfonate catabolic process"/>
    <property type="evidence" value="ECO:0007669"/>
    <property type="project" value="TreeGrafter"/>
</dbReference>
<dbReference type="CDD" id="cd01094">
    <property type="entry name" value="Alkanesulfonate_monoxygenase"/>
    <property type="match status" value="1"/>
</dbReference>
<dbReference type="FunFam" id="3.20.20.30:FF:000001">
    <property type="entry name" value="Alkanesulfonate monooxygenase"/>
    <property type="match status" value="1"/>
</dbReference>
<dbReference type="Gene3D" id="3.20.20.30">
    <property type="entry name" value="Luciferase-like domain"/>
    <property type="match status" value="1"/>
</dbReference>
<dbReference type="HAMAP" id="MF_01229">
    <property type="entry name" value="Alkanesulf_monooxygen"/>
    <property type="match status" value="1"/>
</dbReference>
<dbReference type="InterPro" id="IPR019911">
    <property type="entry name" value="Alkanesulphonate_mOase_FMN-dep"/>
</dbReference>
<dbReference type="InterPro" id="IPR011251">
    <property type="entry name" value="Luciferase-like_dom"/>
</dbReference>
<dbReference type="InterPro" id="IPR036661">
    <property type="entry name" value="Luciferase-like_sf"/>
</dbReference>
<dbReference type="InterPro" id="IPR050172">
    <property type="entry name" value="SsuD_RutA_monooxygenase"/>
</dbReference>
<dbReference type="NCBIfam" id="TIGR03565">
    <property type="entry name" value="alk_sulf_monoox"/>
    <property type="match status" value="1"/>
</dbReference>
<dbReference type="NCBIfam" id="NF001939">
    <property type="entry name" value="PRK00719.1"/>
    <property type="match status" value="1"/>
</dbReference>
<dbReference type="PANTHER" id="PTHR42847">
    <property type="entry name" value="ALKANESULFONATE MONOOXYGENASE"/>
    <property type="match status" value="1"/>
</dbReference>
<dbReference type="PANTHER" id="PTHR42847:SF4">
    <property type="entry name" value="ALKANESULFONATE MONOOXYGENASE-RELATED"/>
    <property type="match status" value="1"/>
</dbReference>
<dbReference type="Pfam" id="PF00296">
    <property type="entry name" value="Bac_luciferase"/>
    <property type="match status" value="1"/>
</dbReference>
<dbReference type="SUPFAM" id="SSF51679">
    <property type="entry name" value="Bacterial luciferase-like"/>
    <property type="match status" value="1"/>
</dbReference>
<evidence type="ECO:0000255" key="1">
    <source>
        <dbReference type="HAMAP-Rule" id="MF_01229"/>
    </source>
</evidence>
<gene>
    <name evidence="1" type="primary">ssuD</name>
    <name type="ordered locus">ECIAI39_2212</name>
</gene>
<proteinExistence type="inferred from homology"/>
<reference key="1">
    <citation type="journal article" date="2009" name="PLoS Genet.">
        <title>Organised genome dynamics in the Escherichia coli species results in highly diverse adaptive paths.</title>
        <authorList>
            <person name="Touchon M."/>
            <person name="Hoede C."/>
            <person name="Tenaillon O."/>
            <person name="Barbe V."/>
            <person name="Baeriswyl S."/>
            <person name="Bidet P."/>
            <person name="Bingen E."/>
            <person name="Bonacorsi S."/>
            <person name="Bouchier C."/>
            <person name="Bouvet O."/>
            <person name="Calteau A."/>
            <person name="Chiapello H."/>
            <person name="Clermont O."/>
            <person name="Cruveiller S."/>
            <person name="Danchin A."/>
            <person name="Diard M."/>
            <person name="Dossat C."/>
            <person name="Karoui M.E."/>
            <person name="Frapy E."/>
            <person name="Garry L."/>
            <person name="Ghigo J.M."/>
            <person name="Gilles A.M."/>
            <person name="Johnson J."/>
            <person name="Le Bouguenec C."/>
            <person name="Lescat M."/>
            <person name="Mangenot S."/>
            <person name="Martinez-Jehanne V."/>
            <person name="Matic I."/>
            <person name="Nassif X."/>
            <person name="Oztas S."/>
            <person name="Petit M.A."/>
            <person name="Pichon C."/>
            <person name="Rouy Z."/>
            <person name="Ruf C.S."/>
            <person name="Schneider D."/>
            <person name="Tourret J."/>
            <person name="Vacherie B."/>
            <person name="Vallenet D."/>
            <person name="Medigue C."/>
            <person name="Rocha E.P.C."/>
            <person name="Denamur E."/>
        </authorList>
    </citation>
    <scope>NUCLEOTIDE SEQUENCE [LARGE SCALE GENOMIC DNA]</scope>
    <source>
        <strain>IAI39 / ExPEC</strain>
    </source>
</reference>
<feature type="chain" id="PRO_1000139618" description="Alkanesulfonate monooxygenase">
    <location>
        <begin position="1"/>
        <end position="381"/>
    </location>
</feature>
<name>SSUD_ECO7I</name>
<organism>
    <name type="scientific">Escherichia coli O7:K1 (strain IAI39 / ExPEC)</name>
    <dbReference type="NCBI Taxonomy" id="585057"/>
    <lineage>
        <taxon>Bacteria</taxon>
        <taxon>Pseudomonadati</taxon>
        <taxon>Pseudomonadota</taxon>
        <taxon>Gammaproteobacteria</taxon>
        <taxon>Enterobacterales</taxon>
        <taxon>Enterobacteriaceae</taxon>
        <taxon>Escherichia</taxon>
    </lineage>
</organism>
<protein>
    <recommendedName>
        <fullName evidence="1">Alkanesulfonate monooxygenase</fullName>
        <ecNumber evidence="1">1.14.14.5</ecNumber>
    </recommendedName>
    <alternativeName>
        <fullName evidence="1">FMNH2-dependent aliphatic sulfonate monooxygenase</fullName>
    </alternativeName>
</protein>
<keyword id="KW-0285">Flavoprotein</keyword>
<keyword id="KW-0288">FMN</keyword>
<keyword id="KW-0503">Monooxygenase</keyword>
<keyword id="KW-0560">Oxidoreductase</keyword>
<sequence>MSLNMFWFLPTHGDGHYLGTEEGSRPVDHGYLQQIAQAADRLGYTGVLIPTGRSCEDAWLVEASMIPVTQRLKFLVALRPSVTSPTVAARQAATLDRLSNGRALFNLVTGSDPQELAGDGVFLDHSERYEASAEFTQVWRRLLLGETVDFNGKHIHVRGAKLLFPPIQQPYPPLYFGGSSDVAQELAAEQVDLYLTWGEPPELVKEKIEQVRAKAAAHGRKIRFGIRLHVIVRETNDEAWQAAERLISHLDDETIAKAQAAFARTDSVGQQRMAALHNGKRDNLEISPNLWAGVGLVRGGAGTALVGDGPTVAARINEYAALGIDSFVLSGYPHLEEAYRVGELLFPHLDVAIPEIPQPQPLNPQGEAVANDFIPRNVAQS</sequence>
<accession>B7NM39</accession>